<organism>
    <name type="scientific">Sicarius peruensis</name>
    <name type="common">Six-eyed sand spider</name>
    <dbReference type="NCBI Taxonomy" id="571541"/>
    <lineage>
        <taxon>Eukaryota</taxon>
        <taxon>Metazoa</taxon>
        <taxon>Ecdysozoa</taxon>
        <taxon>Arthropoda</taxon>
        <taxon>Chelicerata</taxon>
        <taxon>Arachnida</taxon>
        <taxon>Araneae</taxon>
        <taxon>Araneomorphae</taxon>
        <taxon>Haplogynae</taxon>
        <taxon>Scytodoidea</taxon>
        <taxon>Sicariidae</taxon>
        <taxon>Sicarius</taxon>
    </lineage>
</organism>
<dbReference type="EC" id="4.6.1.-" evidence="4"/>
<dbReference type="EMBL" id="FJ171473">
    <property type="protein sequence ID" value="ACN48969.1"/>
    <property type="molecule type" value="mRNA"/>
</dbReference>
<dbReference type="SMR" id="C0JB38"/>
<dbReference type="GO" id="GO:0005576">
    <property type="term" value="C:extracellular region"/>
    <property type="evidence" value="ECO:0007669"/>
    <property type="project" value="UniProtKB-SubCell"/>
</dbReference>
<dbReference type="GO" id="GO:0016829">
    <property type="term" value="F:lyase activity"/>
    <property type="evidence" value="ECO:0007669"/>
    <property type="project" value="UniProtKB-KW"/>
</dbReference>
<dbReference type="GO" id="GO:0046872">
    <property type="term" value="F:metal ion binding"/>
    <property type="evidence" value="ECO:0007669"/>
    <property type="project" value="UniProtKB-KW"/>
</dbReference>
<dbReference type="GO" id="GO:0008081">
    <property type="term" value="F:phosphoric diester hydrolase activity"/>
    <property type="evidence" value="ECO:0007669"/>
    <property type="project" value="InterPro"/>
</dbReference>
<dbReference type="GO" id="GO:0090729">
    <property type="term" value="F:toxin activity"/>
    <property type="evidence" value="ECO:0007669"/>
    <property type="project" value="UniProtKB-KW"/>
</dbReference>
<dbReference type="GO" id="GO:0031640">
    <property type="term" value="P:killing of cells of another organism"/>
    <property type="evidence" value="ECO:0007669"/>
    <property type="project" value="UniProtKB-KW"/>
</dbReference>
<dbReference type="GO" id="GO:0016042">
    <property type="term" value="P:lipid catabolic process"/>
    <property type="evidence" value="ECO:0007669"/>
    <property type="project" value="UniProtKB-KW"/>
</dbReference>
<dbReference type="CDD" id="cd08576">
    <property type="entry name" value="GDPD_like_SMaseD_PLD"/>
    <property type="match status" value="1"/>
</dbReference>
<dbReference type="Gene3D" id="3.20.20.190">
    <property type="entry name" value="Phosphatidylinositol (PI) phosphodiesterase"/>
    <property type="match status" value="1"/>
</dbReference>
<dbReference type="InterPro" id="IPR017946">
    <property type="entry name" value="PLC-like_Pdiesterase_TIM-brl"/>
</dbReference>
<dbReference type="Pfam" id="PF13653">
    <property type="entry name" value="GDPD_2"/>
    <property type="match status" value="1"/>
</dbReference>
<dbReference type="SUPFAM" id="SSF51695">
    <property type="entry name" value="PLC-like phosphodiesterases"/>
    <property type="match status" value="1"/>
</dbReference>
<feature type="chain" id="PRO_0000392851" description="Dermonecrotic toxin SpeSicTox-betaIB2b">
    <location>
        <begin position="1" status="less than"/>
        <end position="272"/>
    </location>
</feature>
<feature type="active site" evidence="5">
    <location>
        <position position="5"/>
    </location>
</feature>
<feature type="active site" description="Nucleophile" evidence="5">
    <location>
        <position position="41"/>
    </location>
</feature>
<feature type="binding site" evidence="5">
    <location>
        <position position="25"/>
    </location>
    <ligand>
        <name>Mg(2+)</name>
        <dbReference type="ChEBI" id="CHEBI:18420"/>
    </ligand>
</feature>
<feature type="binding site" evidence="5">
    <location>
        <position position="27"/>
    </location>
    <ligand>
        <name>Mg(2+)</name>
        <dbReference type="ChEBI" id="CHEBI:18420"/>
    </ligand>
</feature>
<feature type="binding site" evidence="5">
    <location>
        <position position="85"/>
    </location>
    <ligand>
        <name>Mg(2+)</name>
        <dbReference type="ChEBI" id="CHEBI:18420"/>
    </ligand>
</feature>
<feature type="disulfide bond" evidence="3">
    <location>
        <begin position="45"/>
        <end position="51"/>
    </location>
</feature>
<feature type="disulfide bond" evidence="3">
    <location>
        <begin position="47"/>
        <end position="191"/>
    </location>
</feature>
<feature type="non-terminal residue">
    <location>
        <position position="1"/>
    </location>
</feature>
<protein>
    <recommendedName>
        <fullName evidence="6">Dermonecrotic toxin SpeSicTox-betaIB2b</fullName>
        <ecNumber evidence="4">4.6.1.-</ecNumber>
    </recommendedName>
    <alternativeName>
        <fullName>Phospholipase D</fullName>
        <shortName>PLD</shortName>
    </alternativeName>
    <alternativeName>
        <fullName>Sphingomyelin phosphodiesterase D</fullName>
        <shortName>SMD</shortName>
        <shortName>SMase D</shortName>
        <shortName>Sphingomyelinase D</shortName>
    </alternativeName>
</protein>
<reference key="1">
    <citation type="journal article" date="2009" name="Mol. Biol. Evol.">
        <title>Molecular evolution, functional variation, and proposed nomenclature of the gene family that includes sphingomyelinase D in sicariid spider venoms.</title>
        <authorList>
            <person name="Binford G.J."/>
            <person name="Bodner M.R."/>
            <person name="Cordes M.H."/>
            <person name="Baldwin K.L."/>
            <person name="Rynerson M.R."/>
            <person name="Burns S.N."/>
            <person name="Zobel-Thropp P.A."/>
        </authorList>
    </citation>
    <scope>NUCLEOTIDE SEQUENCE [MRNA]</scope>
    <scope>NOMENCLATURE</scope>
    <source>
        <tissue>Venom gland</tissue>
    </source>
</reference>
<keyword id="KW-0204">Cytolysis</keyword>
<keyword id="KW-1061">Dermonecrotic toxin</keyword>
<keyword id="KW-1015">Disulfide bond</keyword>
<keyword id="KW-0354">Hemolysis</keyword>
<keyword id="KW-0442">Lipid degradation</keyword>
<keyword id="KW-0443">Lipid metabolism</keyword>
<keyword id="KW-0456">Lyase</keyword>
<keyword id="KW-0460">Magnesium</keyword>
<keyword id="KW-0479">Metal-binding</keyword>
<keyword id="KW-0964">Secreted</keyword>
<keyword id="KW-0800">Toxin</keyword>
<comment type="function">
    <text evidence="1 3">Dermonecrotic toxins cleave the phosphodiester linkage between the phosphate and headgroup of certain phospholipids (sphingolipid and lysolipid substrates), forming an alcohol (often choline) and a cyclic phosphate (By similarity). This toxin acts on sphingomyelin (SM) (By similarity). It may also act on ceramide phosphoethanolamine (CPE), lysophosphatidylcholine (LPC) and lysophosphatidylethanolamine (LPE), but not on lysophosphatidylserine (LPS), and lysophosphatidylglycerol (LPG) (By similarity). It acts by transphosphatidylation, releasing exclusively cyclic phosphate products as second products (By similarity). Induces dermonecrosis, hemolysis, increased vascular permeability, edema, inflammatory response, and platelet aggregation (By similarity).</text>
</comment>
<comment type="catalytic activity">
    <reaction evidence="1">
        <text>an N-(acyl)-sphingosylphosphocholine = an N-(acyl)-sphingosyl-1,3-cyclic phosphate + choline</text>
        <dbReference type="Rhea" id="RHEA:60652"/>
        <dbReference type="ChEBI" id="CHEBI:15354"/>
        <dbReference type="ChEBI" id="CHEBI:64583"/>
        <dbReference type="ChEBI" id="CHEBI:143892"/>
    </reaction>
</comment>
<comment type="catalytic activity">
    <reaction evidence="1">
        <text>an N-(acyl)-sphingosylphosphoethanolamine = an N-(acyl)-sphingosyl-1,3-cyclic phosphate + ethanolamine</text>
        <dbReference type="Rhea" id="RHEA:60648"/>
        <dbReference type="ChEBI" id="CHEBI:57603"/>
        <dbReference type="ChEBI" id="CHEBI:143891"/>
        <dbReference type="ChEBI" id="CHEBI:143892"/>
    </reaction>
</comment>
<comment type="catalytic activity">
    <reaction evidence="1">
        <text>a 1-acyl-sn-glycero-3-phosphocholine = a 1-acyl-sn-glycero-2,3-cyclic phosphate + choline</text>
        <dbReference type="Rhea" id="RHEA:60700"/>
        <dbReference type="ChEBI" id="CHEBI:15354"/>
        <dbReference type="ChEBI" id="CHEBI:58168"/>
        <dbReference type="ChEBI" id="CHEBI:143947"/>
    </reaction>
</comment>
<comment type="catalytic activity">
    <reaction evidence="1">
        <text>a 1-acyl-sn-glycero-3-phosphoethanolamine = a 1-acyl-sn-glycero-2,3-cyclic phosphate + ethanolamine</text>
        <dbReference type="Rhea" id="RHEA:60704"/>
        <dbReference type="ChEBI" id="CHEBI:57603"/>
        <dbReference type="ChEBI" id="CHEBI:64381"/>
        <dbReference type="ChEBI" id="CHEBI:143947"/>
    </reaction>
</comment>
<comment type="cofactor">
    <cofactor evidence="5">
        <name>Mg(2+)</name>
        <dbReference type="ChEBI" id="CHEBI:18420"/>
    </cofactor>
    <text evidence="5">Binds 1 Mg(2+) ion per subunit.</text>
</comment>
<comment type="subcellular location">
    <subcellularLocation>
        <location evidence="8">Secreted</location>
    </subcellularLocation>
</comment>
<comment type="tissue specificity">
    <text evidence="8">Expressed by the venom gland.</text>
</comment>
<comment type="similarity">
    <text evidence="7">Belongs to the arthropod phospholipase D family. Class II subfamily.</text>
</comment>
<comment type="caution">
    <text evidence="1 2 4">The most common activity assay for dermonecrotic toxins detects enzymatic activity by monitoring choline release from substrate. Liberation of choline from sphingomyelin (SM) or lysophosphatidylcholine (LPC) is commonly assumed to result from substrate hydrolysis, giving either ceramide-1-phosphate (C1P) or lysophosphatidic acid (LPA), respectively, as a second product. However, two studies from Lajoie and colleagues (2013 and 2015) report the observation of exclusive formation of cyclic phosphate products as second products, resulting from intramolecular transphosphatidylation. Cyclic phosphates have vastly different biological properties from their monoester counterparts, and they may be relevant to the pathology of brown spider envenomation.</text>
</comment>
<sequence>WIMGHMVNDLSLVDEFLNDGANSLELDVEFSSSGTAQRTHHGFPCDCFRYCTNSEKFSTYLDYIRQLTTPGNSKFRSRLILLVMDLKLNPLSSSAAYNAGADVALNLLNHYWQRGESEARAYIVLSLSTIDGAEFISGFKSTMEKEGFADKYYDKIGWDFSGNEDLQQIRDVLENYGIREHIWQGDGITNCLPRGDSRLKEALNLRYSPSYIYADKVYTWSIDEENSIKHALWLGVDGVMTNHPERVIEVLGKSKYSDKFRLATYDDNPWEK</sequence>
<name>B1LB_SICPE</name>
<proteinExistence type="evidence at transcript level"/>
<evidence type="ECO:0000250" key="1">
    <source>
        <dbReference type="UniProtKB" id="A0A0D4WTV1"/>
    </source>
</evidence>
<evidence type="ECO:0000250" key="2">
    <source>
        <dbReference type="UniProtKB" id="A0A0D4WV12"/>
    </source>
</evidence>
<evidence type="ECO:0000250" key="3">
    <source>
        <dbReference type="UniProtKB" id="P0CE80"/>
    </source>
</evidence>
<evidence type="ECO:0000250" key="4">
    <source>
        <dbReference type="UniProtKB" id="Q4ZFU2"/>
    </source>
</evidence>
<evidence type="ECO:0000250" key="5">
    <source>
        <dbReference type="UniProtKB" id="Q8I914"/>
    </source>
</evidence>
<evidence type="ECO:0000303" key="6">
    <source>
    </source>
</evidence>
<evidence type="ECO:0000305" key="7"/>
<evidence type="ECO:0000305" key="8">
    <source>
    </source>
</evidence>
<accession>C0JB38</accession>